<organism>
    <name type="scientific">Ehrlichia canis (strain Jake)</name>
    <dbReference type="NCBI Taxonomy" id="269484"/>
    <lineage>
        <taxon>Bacteria</taxon>
        <taxon>Pseudomonadati</taxon>
        <taxon>Pseudomonadota</taxon>
        <taxon>Alphaproteobacteria</taxon>
        <taxon>Rickettsiales</taxon>
        <taxon>Anaplasmataceae</taxon>
        <taxon>Ehrlichia</taxon>
    </lineage>
</organism>
<accession>Q3YR44</accession>
<reference key="1">
    <citation type="journal article" date="2006" name="J. Bacteriol.">
        <title>The genome of the obligately intracellular bacterium Ehrlichia canis reveals themes of complex membrane structure and immune evasion strategies.</title>
        <authorList>
            <person name="Mavromatis K."/>
            <person name="Doyle C.K."/>
            <person name="Lykidis A."/>
            <person name="Ivanova N."/>
            <person name="Francino M.P."/>
            <person name="Chain P."/>
            <person name="Shin M."/>
            <person name="Malfatti S."/>
            <person name="Larimer F."/>
            <person name="Copeland A."/>
            <person name="Detter J.C."/>
            <person name="Land M."/>
            <person name="Richardson P.M."/>
            <person name="Yu X.J."/>
            <person name="Walker D.H."/>
            <person name="McBride J.W."/>
            <person name="Kyrpides N.C."/>
        </authorList>
    </citation>
    <scope>NUCLEOTIDE SEQUENCE [LARGE SCALE GENOMIC DNA]</scope>
    <source>
        <strain>Jake</strain>
    </source>
</reference>
<gene>
    <name evidence="1" type="primary">tmk</name>
    <name type="ordered locus">Ecaj_0780</name>
</gene>
<keyword id="KW-0067">ATP-binding</keyword>
<keyword id="KW-0418">Kinase</keyword>
<keyword id="KW-0545">Nucleotide biosynthesis</keyword>
<keyword id="KW-0547">Nucleotide-binding</keyword>
<keyword id="KW-0808">Transferase</keyword>
<protein>
    <recommendedName>
        <fullName evidence="1">Thymidylate kinase</fullName>
        <ecNumber evidence="1">2.7.4.9</ecNumber>
    </recommendedName>
    <alternativeName>
        <fullName evidence="1">dTMP kinase</fullName>
    </alternativeName>
</protein>
<sequence>MFITFEGIDGSGKTTQSHLLTEYLSKIYGVNNVVLTREPGGTLLNEAVRDLLFQAKGLDSLSELLFFIAMRREHFMKVIKPSLMQKKIVVCDRFIDSTIAYQGYGQGIDCNLICQLNDLVVDMYPDITFVIDVDVHESLSRSCKNGYEFAELEFYYRVRNGFYSIVEKNPHRCHIITDNNEICDIDGINLIHLKIVKVLQMV</sequence>
<comment type="function">
    <text evidence="1">Phosphorylation of dTMP to form dTDP in both de novo and salvage pathways of dTTP synthesis.</text>
</comment>
<comment type="catalytic activity">
    <reaction evidence="1">
        <text>dTMP + ATP = dTDP + ADP</text>
        <dbReference type="Rhea" id="RHEA:13517"/>
        <dbReference type="ChEBI" id="CHEBI:30616"/>
        <dbReference type="ChEBI" id="CHEBI:58369"/>
        <dbReference type="ChEBI" id="CHEBI:63528"/>
        <dbReference type="ChEBI" id="CHEBI:456216"/>
        <dbReference type="EC" id="2.7.4.9"/>
    </reaction>
</comment>
<comment type="similarity">
    <text evidence="1">Belongs to the thymidylate kinase family.</text>
</comment>
<feature type="chain" id="PRO_1000023189" description="Thymidylate kinase">
    <location>
        <begin position="1"/>
        <end position="202"/>
    </location>
</feature>
<feature type="binding site" evidence="1">
    <location>
        <begin position="7"/>
        <end position="14"/>
    </location>
    <ligand>
        <name>ATP</name>
        <dbReference type="ChEBI" id="CHEBI:30616"/>
    </ligand>
</feature>
<proteinExistence type="inferred from homology"/>
<name>KTHY_EHRCJ</name>
<dbReference type="EC" id="2.7.4.9" evidence="1"/>
<dbReference type="EMBL" id="CP000107">
    <property type="protein sequence ID" value="AAZ68811.1"/>
    <property type="molecule type" value="Genomic_DNA"/>
</dbReference>
<dbReference type="RefSeq" id="WP_011304888.1">
    <property type="nucleotide sequence ID" value="NC_007354.1"/>
</dbReference>
<dbReference type="SMR" id="Q3YR44"/>
<dbReference type="FunCoup" id="Q3YR44">
    <property type="interactions" value="283"/>
</dbReference>
<dbReference type="STRING" id="269484.Ecaj_0780"/>
<dbReference type="KEGG" id="ecn:Ecaj_0780"/>
<dbReference type="eggNOG" id="COG0125">
    <property type="taxonomic scope" value="Bacteria"/>
</dbReference>
<dbReference type="HOGENOM" id="CLU_049131_0_0_5"/>
<dbReference type="InParanoid" id="Q3YR44"/>
<dbReference type="Proteomes" id="UP000000435">
    <property type="component" value="Chromosome"/>
</dbReference>
<dbReference type="GO" id="GO:0005829">
    <property type="term" value="C:cytosol"/>
    <property type="evidence" value="ECO:0007669"/>
    <property type="project" value="TreeGrafter"/>
</dbReference>
<dbReference type="GO" id="GO:0005524">
    <property type="term" value="F:ATP binding"/>
    <property type="evidence" value="ECO:0007669"/>
    <property type="project" value="UniProtKB-UniRule"/>
</dbReference>
<dbReference type="GO" id="GO:0004798">
    <property type="term" value="F:dTMP kinase activity"/>
    <property type="evidence" value="ECO:0007669"/>
    <property type="project" value="UniProtKB-UniRule"/>
</dbReference>
<dbReference type="GO" id="GO:0006233">
    <property type="term" value="P:dTDP biosynthetic process"/>
    <property type="evidence" value="ECO:0007669"/>
    <property type="project" value="InterPro"/>
</dbReference>
<dbReference type="GO" id="GO:0006235">
    <property type="term" value="P:dTTP biosynthetic process"/>
    <property type="evidence" value="ECO:0007669"/>
    <property type="project" value="UniProtKB-UniRule"/>
</dbReference>
<dbReference type="GO" id="GO:0006227">
    <property type="term" value="P:dUDP biosynthetic process"/>
    <property type="evidence" value="ECO:0007669"/>
    <property type="project" value="TreeGrafter"/>
</dbReference>
<dbReference type="CDD" id="cd01672">
    <property type="entry name" value="TMPK"/>
    <property type="match status" value="1"/>
</dbReference>
<dbReference type="FunFam" id="3.40.50.300:FF:000225">
    <property type="entry name" value="Thymidylate kinase"/>
    <property type="match status" value="1"/>
</dbReference>
<dbReference type="Gene3D" id="3.40.50.300">
    <property type="entry name" value="P-loop containing nucleotide triphosphate hydrolases"/>
    <property type="match status" value="1"/>
</dbReference>
<dbReference type="HAMAP" id="MF_00165">
    <property type="entry name" value="Thymidylate_kinase"/>
    <property type="match status" value="1"/>
</dbReference>
<dbReference type="InterPro" id="IPR027417">
    <property type="entry name" value="P-loop_NTPase"/>
</dbReference>
<dbReference type="InterPro" id="IPR039430">
    <property type="entry name" value="Thymidylate_kin-like_dom"/>
</dbReference>
<dbReference type="InterPro" id="IPR018095">
    <property type="entry name" value="Thymidylate_kin_CS"/>
</dbReference>
<dbReference type="InterPro" id="IPR018094">
    <property type="entry name" value="Thymidylate_kinase"/>
</dbReference>
<dbReference type="NCBIfam" id="TIGR00041">
    <property type="entry name" value="DTMP_kinase"/>
    <property type="match status" value="1"/>
</dbReference>
<dbReference type="PANTHER" id="PTHR10344">
    <property type="entry name" value="THYMIDYLATE KINASE"/>
    <property type="match status" value="1"/>
</dbReference>
<dbReference type="PANTHER" id="PTHR10344:SF4">
    <property type="entry name" value="UMP-CMP KINASE 2, MITOCHONDRIAL"/>
    <property type="match status" value="1"/>
</dbReference>
<dbReference type="Pfam" id="PF02223">
    <property type="entry name" value="Thymidylate_kin"/>
    <property type="match status" value="1"/>
</dbReference>
<dbReference type="SUPFAM" id="SSF52540">
    <property type="entry name" value="P-loop containing nucleoside triphosphate hydrolases"/>
    <property type="match status" value="1"/>
</dbReference>
<dbReference type="PROSITE" id="PS01331">
    <property type="entry name" value="THYMIDYLATE_KINASE"/>
    <property type="match status" value="1"/>
</dbReference>
<evidence type="ECO:0000255" key="1">
    <source>
        <dbReference type="HAMAP-Rule" id="MF_00165"/>
    </source>
</evidence>